<accession>Q38VD0</accession>
<reference key="1">
    <citation type="journal article" date="2005" name="Nat. Biotechnol.">
        <title>The complete genome sequence of the meat-borne lactic acid bacterium Lactobacillus sakei 23K.</title>
        <authorList>
            <person name="Chaillou S."/>
            <person name="Champomier-Verges M.-C."/>
            <person name="Cornet M."/>
            <person name="Crutz-Le Coq A.-M."/>
            <person name="Dudez A.-M."/>
            <person name="Martin V."/>
            <person name="Beaufils S."/>
            <person name="Darbon-Rongere E."/>
            <person name="Bossy R."/>
            <person name="Loux V."/>
            <person name="Zagorec M."/>
        </authorList>
    </citation>
    <scope>NUCLEOTIDE SEQUENCE [LARGE SCALE GENOMIC DNA]</scope>
    <source>
        <strain>23K</strain>
    </source>
</reference>
<organism>
    <name type="scientific">Latilactobacillus sakei subsp. sakei (strain 23K)</name>
    <name type="common">Lactobacillus sakei subsp. sakei</name>
    <dbReference type="NCBI Taxonomy" id="314315"/>
    <lineage>
        <taxon>Bacteria</taxon>
        <taxon>Bacillati</taxon>
        <taxon>Bacillota</taxon>
        <taxon>Bacilli</taxon>
        <taxon>Lactobacillales</taxon>
        <taxon>Lactobacillaceae</taxon>
        <taxon>Latilactobacillus</taxon>
    </lineage>
</organism>
<proteinExistence type="inferred from homology"/>
<dbReference type="EC" id="6.3.5.-" evidence="1"/>
<dbReference type="EMBL" id="CR936503">
    <property type="protein sequence ID" value="CAI55853.1"/>
    <property type="molecule type" value="Genomic_DNA"/>
</dbReference>
<dbReference type="RefSeq" id="WP_011375241.1">
    <property type="nucleotide sequence ID" value="NC_007576.1"/>
</dbReference>
<dbReference type="SMR" id="Q38VD0"/>
<dbReference type="STRING" id="314315.LCA_1546"/>
<dbReference type="GeneID" id="57132459"/>
<dbReference type="KEGG" id="lsa:LCA_1546"/>
<dbReference type="eggNOG" id="COG0064">
    <property type="taxonomic scope" value="Bacteria"/>
</dbReference>
<dbReference type="HOGENOM" id="CLU_019240_0_0_9"/>
<dbReference type="OrthoDB" id="9804078at2"/>
<dbReference type="Proteomes" id="UP000002707">
    <property type="component" value="Chromosome"/>
</dbReference>
<dbReference type="GO" id="GO:0050566">
    <property type="term" value="F:asparaginyl-tRNA synthase (glutamine-hydrolyzing) activity"/>
    <property type="evidence" value="ECO:0007669"/>
    <property type="project" value="RHEA"/>
</dbReference>
<dbReference type="GO" id="GO:0005524">
    <property type="term" value="F:ATP binding"/>
    <property type="evidence" value="ECO:0007669"/>
    <property type="project" value="UniProtKB-KW"/>
</dbReference>
<dbReference type="GO" id="GO:0050567">
    <property type="term" value="F:glutaminyl-tRNA synthase (glutamine-hydrolyzing) activity"/>
    <property type="evidence" value="ECO:0007669"/>
    <property type="project" value="UniProtKB-UniRule"/>
</dbReference>
<dbReference type="GO" id="GO:0070681">
    <property type="term" value="P:glutaminyl-tRNAGln biosynthesis via transamidation"/>
    <property type="evidence" value="ECO:0007669"/>
    <property type="project" value="TreeGrafter"/>
</dbReference>
<dbReference type="GO" id="GO:0006412">
    <property type="term" value="P:translation"/>
    <property type="evidence" value="ECO:0007669"/>
    <property type="project" value="UniProtKB-UniRule"/>
</dbReference>
<dbReference type="FunFam" id="1.10.10.410:FF:000001">
    <property type="entry name" value="Aspartyl/glutamyl-tRNA(Asn/Gln) amidotransferase subunit B"/>
    <property type="match status" value="1"/>
</dbReference>
<dbReference type="FunFam" id="1.10.150.380:FF:000001">
    <property type="entry name" value="Aspartyl/glutamyl-tRNA(Asn/Gln) amidotransferase subunit B"/>
    <property type="match status" value="1"/>
</dbReference>
<dbReference type="Gene3D" id="1.10.10.410">
    <property type="match status" value="1"/>
</dbReference>
<dbReference type="Gene3D" id="1.10.150.380">
    <property type="entry name" value="GatB domain, N-terminal subdomain"/>
    <property type="match status" value="1"/>
</dbReference>
<dbReference type="HAMAP" id="MF_00121">
    <property type="entry name" value="GatB"/>
    <property type="match status" value="1"/>
</dbReference>
<dbReference type="InterPro" id="IPR017959">
    <property type="entry name" value="Asn/Gln-tRNA_amidoTrfase_suB/E"/>
</dbReference>
<dbReference type="InterPro" id="IPR006075">
    <property type="entry name" value="Asn/Gln-tRNA_Trfase_suB/E_cat"/>
</dbReference>
<dbReference type="InterPro" id="IPR018027">
    <property type="entry name" value="Asn/Gln_amidotransferase"/>
</dbReference>
<dbReference type="InterPro" id="IPR003789">
    <property type="entry name" value="Asn/Gln_tRNA_amidoTrase-B-like"/>
</dbReference>
<dbReference type="InterPro" id="IPR004413">
    <property type="entry name" value="GatB"/>
</dbReference>
<dbReference type="InterPro" id="IPR042114">
    <property type="entry name" value="GatB_C_1"/>
</dbReference>
<dbReference type="InterPro" id="IPR023168">
    <property type="entry name" value="GatB_Yqey_C_2"/>
</dbReference>
<dbReference type="InterPro" id="IPR017958">
    <property type="entry name" value="Gln-tRNA_amidoTrfase_suB_CS"/>
</dbReference>
<dbReference type="InterPro" id="IPR014746">
    <property type="entry name" value="Gln_synth/guanido_kin_cat_dom"/>
</dbReference>
<dbReference type="NCBIfam" id="TIGR00133">
    <property type="entry name" value="gatB"/>
    <property type="match status" value="1"/>
</dbReference>
<dbReference type="NCBIfam" id="NF004011">
    <property type="entry name" value="PRK05477.1-1"/>
    <property type="match status" value="1"/>
</dbReference>
<dbReference type="NCBIfam" id="NF004012">
    <property type="entry name" value="PRK05477.1-2"/>
    <property type="match status" value="1"/>
</dbReference>
<dbReference type="NCBIfam" id="NF004014">
    <property type="entry name" value="PRK05477.1-4"/>
    <property type="match status" value="1"/>
</dbReference>
<dbReference type="PANTHER" id="PTHR11659">
    <property type="entry name" value="GLUTAMYL-TRNA GLN AMIDOTRANSFERASE SUBUNIT B MITOCHONDRIAL AND PROKARYOTIC PET112-RELATED"/>
    <property type="match status" value="1"/>
</dbReference>
<dbReference type="PANTHER" id="PTHR11659:SF0">
    <property type="entry name" value="GLUTAMYL-TRNA(GLN) AMIDOTRANSFERASE SUBUNIT B, MITOCHONDRIAL"/>
    <property type="match status" value="1"/>
</dbReference>
<dbReference type="Pfam" id="PF02934">
    <property type="entry name" value="GatB_N"/>
    <property type="match status" value="1"/>
</dbReference>
<dbReference type="Pfam" id="PF02637">
    <property type="entry name" value="GatB_Yqey"/>
    <property type="match status" value="1"/>
</dbReference>
<dbReference type="SMART" id="SM00845">
    <property type="entry name" value="GatB_Yqey"/>
    <property type="match status" value="1"/>
</dbReference>
<dbReference type="SUPFAM" id="SSF89095">
    <property type="entry name" value="GatB/YqeY motif"/>
    <property type="match status" value="1"/>
</dbReference>
<dbReference type="SUPFAM" id="SSF55931">
    <property type="entry name" value="Glutamine synthetase/guanido kinase"/>
    <property type="match status" value="1"/>
</dbReference>
<dbReference type="PROSITE" id="PS01234">
    <property type="entry name" value="GATB"/>
    <property type="match status" value="1"/>
</dbReference>
<keyword id="KW-0067">ATP-binding</keyword>
<keyword id="KW-0436">Ligase</keyword>
<keyword id="KW-0547">Nucleotide-binding</keyword>
<keyword id="KW-0648">Protein biosynthesis</keyword>
<keyword id="KW-1185">Reference proteome</keyword>
<protein>
    <recommendedName>
        <fullName evidence="1">Aspartyl/glutamyl-tRNA(Asn/Gln) amidotransferase subunit B</fullName>
        <shortName evidence="1">Asp/Glu-ADT subunit B</shortName>
        <ecNumber evidence="1">6.3.5.-</ecNumber>
    </recommendedName>
</protein>
<name>GATB_LATSS</name>
<comment type="function">
    <text evidence="1">Allows the formation of correctly charged Asn-tRNA(Asn) or Gln-tRNA(Gln) through the transamidation of misacylated Asp-tRNA(Asn) or Glu-tRNA(Gln) in organisms which lack either or both of asparaginyl-tRNA or glutaminyl-tRNA synthetases. The reaction takes place in the presence of glutamine and ATP through an activated phospho-Asp-tRNA(Asn) or phospho-Glu-tRNA(Gln).</text>
</comment>
<comment type="catalytic activity">
    <reaction evidence="1">
        <text>L-glutamyl-tRNA(Gln) + L-glutamine + ATP + H2O = L-glutaminyl-tRNA(Gln) + L-glutamate + ADP + phosphate + H(+)</text>
        <dbReference type="Rhea" id="RHEA:17521"/>
        <dbReference type="Rhea" id="RHEA-COMP:9681"/>
        <dbReference type="Rhea" id="RHEA-COMP:9684"/>
        <dbReference type="ChEBI" id="CHEBI:15377"/>
        <dbReference type="ChEBI" id="CHEBI:15378"/>
        <dbReference type="ChEBI" id="CHEBI:29985"/>
        <dbReference type="ChEBI" id="CHEBI:30616"/>
        <dbReference type="ChEBI" id="CHEBI:43474"/>
        <dbReference type="ChEBI" id="CHEBI:58359"/>
        <dbReference type="ChEBI" id="CHEBI:78520"/>
        <dbReference type="ChEBI" id="CHEBI:78521"/>
        <dbReference type="ChEBI" id="CHEBI:456216"/>
    </reaction>
</comment>
<comment type="catalytic activity">
    <reaction evidence="1">
        <text>L-aspartyl-tRNA(Asn) + L-glutamine + ATP + H2O = L-asparaginyl-tRNA(Asn) + L-glutamate + ADP + phosphate + 2 H(+)</text>
        <dbReference type="Rhea" id="RHEA:14513"/>
        <dbReference type="Rhea" id="RHEA-COMP:9674"/>
        <dbReference type="Rhea" id="RHEA-COMP:9677"/>
        <dbReference type="ChEBI" id="CHEBI:15377"/>
        <dbReference type="ChEBI" id="CHEBI:15378"/>
        <dbReference type="ChEBI" id="CHEBI:29985"/>
        <dbReference type="ChEBI" id="CHEBI:30616"/>
        <dbReference type="ChEBI" id="CHEBI:43474"/>
        <dbReference type="ChEBI" id="CHEBI:58359"/>
        <dbReference type="ChEBI" id="CHEBI:78515"/>
        <dbReference type="ChEBI" id="CHEBI:78516"/>
        <dbReference type="ChEBI" id="CHEBI:456216"/>
    </reaction>
</comment>
<comment type="subunit">
    <text evidence="1">Heterotrimer of A, B and C subunits.</text>
</comment>
<comment type="similarity">
    <text evidence="1">Belongs to the GatB/GatE family. GatB subfamily.</text>
</comment>
<sequence>MNFETTIGLEVHIELKTNSKMYSPSPVNYGAEPNTNTNVIDWGYPGTLPTLNKGAYTLGMMVATALHADIARDTHFDRKNYFYPDNPKAYQITQYEQPLGKDGYIEVEIDGHKKQIGIAELHVEEDAGKNTHGSDGYSYVDLNRQGTALIEIVSKPDMSTPEEAYAYLETLRQIVQFTGASDVKMEEGSMRVDTNISVRPIGAKKYGVKSELKNLNSFNHVRLGLAYEIKRQSQLLIAGETIRPETRRFDEKSGETYLMRVKSGADDYRYFPEPDLPPMHIGDDWLKEVQDNMPEMPAKRRTRYVDELGLPEYDAGVLTNTKEMSDFFEAAVANGAAPKQVSNWLMGEVNAYLNDKQIDLQETALTPEHLAQMINLIKDGIISSKIAKKVFQEIIQNDTDPKAWVEAKGMVQLSDPAKLTPIITGILDDNQQSIDDFKNGKDRAVGFLVGKIMKETRGQANPKVVNDLLMAELNKR</sequence>
<feature type="chain" id="PRO_0000241232" description="Aspartyl/glutamyl-tRNA(Asn/Gln) amidotransferase subunit B">
    <location>
        <begin position="1"/>
        <end position="476"/>
    </location>
</feature>
<gene>
    <name evidence="1" type="primary">gatB</name>
    <name type="ordered locus">LCA_1546</name>
</gene>
<evidence type="ECO:0000255" key="1">
    <source>
        <dbReference type="HAMAP-Rule" id="MF_00121"/>
    </source>
</evidence>